<accession>Q7TNC9</accession>
<accession>E9QAS7</accession>
<accession>Q8BNK3</accession>
<protein>
    <recommendedName>
        <fullName>Inositol polyphosphate-5-phosphatase A</fullName>
        <ecNumber evidence="2">3.1.3.56</ecNumber>
    </recommendedName>
    <alternativeName>
        <fullName>Type I inositol 1,4,5-trisphosphate 5-phosphatase</fullName>
        <shortName>5PTase</shortName>
    </alternativeName>
</protein>
<keyword id="KW-0025">Alternative splicing</keyword>
<keyword id="KW-1003">Cell membrane</keyword>
<keyword id="KW-0966">Cell projection</keyword>
<keyword id="KW-0378">Hydrolase</keyword>
<keyword id="KW-0449">Lipoprotein</keyword>
<keyword id="KW-0472">Membrane</keyword>
<keyword id="KW-0636">Prenylation</keyword>
<keyword id="KW-1185">Reference proteome</keyword>
<gene>
    <name type="primary">Inpp5a</name>
</gene>
<sequence length="412" mass="47622">MAGKAAAPGTAVLLVTANVGSLFDDPENLQKNWLREFYQVLHTHKPHFMALHCQEFGGKNYEASMSHVDKFVKELLSSDAMKEYNRARVYLDENYKSQEHFTALGSFYFLHESLKNIYQFDFKAKKYKKVTGKEIYSDTLESTPMLEKEKFPQDYFPECKWSRKGFIRTRWCIADCAFDLVNIHLFHDASNLVAWETSPSVYSGVRHKALGYVLDRIIDQRFEKVSYFVFGDFNFRLDSKSVVETLCTKATMQTVRAADTNEVVKLIFRESDNDRKVVLQLEKKLFDYFNQDVFRDNNGTALLEFDKELSVFKDRLYELDISFPPSYPYSEDSSQGEQYMNTRCPAWCDRILMSLSAKELVLKSESEEKVATYDHIGPNVCMGDHKPVFLAFRIAPGAGKPHAHVHKCCVVQ</sequence>
<evidence type="ECO:0000250" key="1">
    <source>
        <dbReference type="UniProtKB" id="Q14642"/>
    </source>
</evidence>
<evidence type="ECO:0000269" key="2">
    <source>
    </source>
</evidence>
<evidence type="ECO:0000269" key="3">
    <source>
    </source>
</evidence>
<evidence type="ECO:0000305" key="4"/>
<evidence type="ECO:0000305" key="5">
    <source>
    </source>
</evidence>
<dbReference type="EC" id="3.1.3.56" evidence="2"/>
<dbReference type="EMBL" id="AK083449">
    <property type="protein sequence ID" value="BAC38919.1"/>
    <property type="molecule type" value="mRNA"/>
</dbReference>
<dbReference type="EMBL" id="AK171360">
    <property type="protein sequence ID" value="BAE42408.1"/>
    <property type="molecule type" value="mRNA"/>
</dbReference>
<dbReference type="EMBL" id="AK171880">
    <property type="protein sequence ID" value="BAE42716.1"/>
    <property type="molecule type" value="mRNA"/>
</dbReference>
<dbReference type="EMBL" id="AC112670">
    <property type="status" value="NOT_ANNOTATED_CDS"/>
    <property type="molecule type" value="Genomic_DNA"/>
</dbReference>
<dbReference type="EMBL" id="AC118735">
    <property type="status" value="NOT_ANNOTATED_CDS"/>
    <property type="molecule type" value="Genomic_DNA"/>
</dbReference>
<dbReference type="EMBL" id="BC056341">
    <property type="protein sequence ID" value="AAH56341.1"/>
    <property type="molecule type" value="mRNA"/>
</dbReference>
<dbReference type="CCDS" id="CCDS21954.1">
    <molecule id="Q7TNC9-2"/>
</dbReference>
<dbReference type="CCDS" id="CCDS52428.1">
    <molecule id="Q7TNC9-1"/>
</dbReference>
<dbReference type="RefSeq" id="NP_001120835.1">
    <molecule id="Q7TNC9-1"/>
    <property type="nucleotide sequence ID" value="NM_001127363.1"/>
</dbReference>
<dbReference type="RefSeq" id="NP_898967.2">
    <molecule id="Q7TNC9-2"/>
    <property type="nucleotide sequence ID" value="NM_183144.3"/>
</dbReference>
<dbReference type="FunCoup" id="Q7TNC9">
    <property type="interactions" value="820"/>
</dbReference>
<dbReference type="STRING" id="10090.ENSMUSP00000026550"/>
<dbReference type="iPTMnet" id="Q7TNC9"/>
<dbReference type="PhosphoSitePlus" id="Q7TNC9"/>
<dbReference type="SwissPalm" id="Q7TNC9"/>
<dbReference type="jPOST" id="Q7TNC9"/>
<dbReference type="PaxDb" id="10090-ENSMUSP00000026550"/>
<dbReference type="PeptideAtlas" id="Q7TNC9"/>
<dbReference type="ProteomicsDB" id="324816"/>
<dbReference type="ProteomicsDB" id="334457">
    <molecule id="Q7TNC9-1"/>
</dbReference>
<dbReference type="Antibodypedia" id="1413">
    <property type="antibodies" value="155 antibodies from 25 providers"/>
</dbReference>
<dbReference type="DNASU" id="212111"/>
<dbReference type="Ensembl" id="ENSMUST00000026550.14">
    <molecule id="Q7TNC9-2"/>
    <property type="protein sequence ID" value="ENSMUSP00000026550.8"/>
    <property type="gene ID" value="ENSMUSG00000025477.15"/>
</dbReference>
<dbReference type="Ensembl" id="ENSMUST00000106098.8">
    <molecule id="Q7TNC9-1"/>
    <property type="protein sequence ID" value="ENSMUSP00000101704.2"/>
    <property type="gene ID" value="ENSMUSG00000025477.15"/>
</dbReference>
<dbReference type="GeneID" id="212111"/>
<dbReference type="KEGG" id="mmu:212111"/>
<dbReference type="UCSC" id="uc009kfr.2">
    <molecule id="Q7TNC9-1"/>
    <property type="organism name" value="mouse"/>
</dbReference>
<dbReference type="AGR" id="MGI:2686961"/>
<dbReference type="CTD" id="3632"/>
<dbReference type="MGI" id="MGI:2686961">
    <property type="gene designation" value="Inpp5a"/>
</dbReference>
<dbReference type="VEuPathDB" id="HostDB:ENSMUSG00000025477"/>
<dbReference type="eggNOG" id="KOG1976">
    <property type="taxonomic scope" value="Eukaryota"/>
</dbReference>
<dbReference type="GeneTree" id="ENSGT00390000015226"/>
<dbReference type="HOGENOM" id="CLU_057709_1_0_1"/>
<dbReference type="InParanoid" id="Q7TNC9"/>
<dbReference type="OMA" id="FGMETCT"/>
<dbReference type="OrthoDB" id="13799at9989"/>
<dbReference type="TreeFam" id="TF314246"/>
<dbReference type="Reactome" id="R-MMU-1855183">
    <property type="pathway name" value="Synthesis of IP2, IP, and Ins in the cytosol"/>
</dbReference>
<dbReference type="BioGRID-ORCS" id="212111">
    <property type="hits" value="7 hits in 80 CRISPR screens"/>
</dbReference>
<dbReference type="CD-CODE" id="CE726F99">
    <property type="entry name" value="Postsynaptic density"/>
</dbReference>
<dbReference type="ChiTaRS" id="Inpp5a">
    <property type="organism name" value="mouse"/>
</dbReference>
<dbReference type="PRO" id="PR:Q7TNC9"/>
<dbReference type="Proteomes" id="UP000000589">
    <property type="component" value="Chromosome 7"/>
</dbReference>
<dbReference type="Bgee" id="ENSMUSG00000025477">
    <property type="expression patterns" value="Expressed in ileal epithelium and 266 other cell types or tissues"/>
</dbReference>
<dbReference type="ExpressionAtlas" id="Q7TNC9">
    <property type="expression patterns" value="baseline and differential"/>
</dbReference>
<dbReference type="GO" id="GO:0030425">
    <property type="term" value="C:dendrite"/>
    <property type="evidence" value="ECO:0000314"/>
    <property type="project" value="UniProtKB"/>
</dbReference>
<dbReference type="GO" id="GO:0016020">
    <property type="term" value="C:membrane"/>
    <property type="evidence" value="ECO:0000266"/>
    <property type="project" value="MGI"/>
</dbReference>
<dbReference type="GO" id="GO:0005886">
    <property type="term" value="C:plasma membrane"/>
    <property type="evidence" value="ECO:0000250"/>
    <property type="project" value="UniProtKB"/>
</dbReference>
<dbReference type="GO" id="GO:0004445">
    <property type="term" value="F:inositol-polyphosphate 5-phosphatase activity"/>
    <property type="evidence" value="ECO:0000315"/>
    <property type="project" value="UniProtKB"/>
</dbReference>
<dbReference type="GO" id="GO:0042731">
    <property type="term" value="F:PH domain binding"/>
    <property type="evidence" value="ECO:0007669"/>
    <property type="project" value="Ensembl"/>
</dbReference>
<dbReference type="GO" id="GO:1900737">
    <property type="term" value="P:negative regulation of phospholipase C-activating G protein-coupled receptor signaling pathway"/>
    <property type="evidence" value="ECO:0000315"/>
    <property type="project" value="UniProtKB"/>
</dbReference>
<dbReference type="GO" id="GO:0046856">
    <property type="term" value="P:phosphatidylinositol dephosphorylation"/>
    <property type="evidence" value="ECO:0007669"/>
    <property type="project" value="InterPro"/>
</dbReference>
<dbReference type="CDD" id="cd09092">
    <property type="entry name" value="INPP5A"/>
    <property type="match status" value="1"/>
</dbReference>
<dbReference type="Gene3D" id="3.60.10.10">
    <property type="entry name" value="Endonuclease/exonuclease/phosphatase"/>
    <property type="match status" value="1"/>
</dbReference>
<dbReference type="InterPro" id="IPR036691">
    <property type="entry name" value="Endo/exonu/phosph_ase_sf"/>
</dbReference>
<dbReference type="InterPro" id="IPR039737">
    <property type="entry name" value="INPP5A"/>
</dbReference>
<dbReference type="InterPro" id="IPR000300">
    <property type="entry name" value="IPPc"/>
</dbReference>
<dbReference type="PANTHER" id="PTHR12997:SF2">
    <property type="entry name" value="INOSITOL POLYPHOSPHATE-5-PHOSPHATASE A"/>
    <property type="match status" value="1"/>
</dbReference>
<dbReference type="PANTHER" id="PTHR12997">
    <property type="entry name" value="TYPE I INOSITOL-1,4,5-TRISPHOSPHATE 5-PHOSPHATASE"/>
    <property type="match status" value="1"/>
</dbReference>
<dbReference type="Pfam" id="PF22669">
    <property type="entry name" value="Exo_endo_phos2"/>
    <property type="match status" value="1"/>
</dbReference>
<dbReference type="SMART" id="SM00128">
    <property type="entry name" value="IPPc"/>
    <property type="match status" value="1"/>
</dbReference>
<dbReference type="SUPFAM" id="SSF56219">
    <property type="entry name" value="DNase I-like"/>
    <property type="match status" value="1"/>
</dbReference>
<reference key="1">
    <citation type="journal article" date="2005" name="Science">
        <title>The transcriptional landscape of the mammalian genome.</title>
        <authorList>
            <person name="Carninci P."/>
            <person name="Kasukawa T."/>
            <person name="Katayama S."/>
            <person name="Gough J."/>
            <person name="Frith M.C."/>
            <person name="Maeda N."/>
            <person name="Oyama R."/>
            <person name="Ravasi T."/>
            <person name="Lenhard B."/>
            <person name="Wells C."/>
            <person name="Kodzius R."/>
            <person name="Shimokawa K."/>
            <person name="Bajic V.B."/>
            <person name="Brenner S.E."/>
            <person name="Batalov S."/>
            <person name="Forrest A.R."/>
            <person name="Zavolan M."/>
            <person name="Davis M.J."/>
            <person name="Wilming L.G."/>
            <person name="Aidinis V."/>
            <person name="Allen J.E."/>
            <person name="Ambesi-Impiombato A."/>
            <person name="Apweiler R."/>
            <person name="Aturaliya R.N."/>
            <person name="Bailey T.L."/>
            <person name="Bansal M."/>
            <person name="Baxter L."/>
            <person name="Beisel K.W."/>
            <person name="Bersano T."/>
            <person name="Bono H."/>
            <person name="Chalk A.M."/>
            <person name="Chiu K.P."/>
            <person name="Choudhary V."/>
            <person name="Christoffels A."/>
            <person name="Clutterbuck D.R."/>
            <person name="Crowe M.L."/>
            <person name="Dalla E."/>
            <person name="Dalrymple B.P."/>
            <person name="de Bono B."/>
            <person name="Della Gatta G."/>
            <person name="di Bernardo D."/>
            <person name="Down T."/>
            <person name="Engstrom P."/>
            <person name="Fagiolini M."/>
            <person name="Faulkner G."/>
            <person name="Fletcher C.F."/>
            <person name="Fukushima T."/>
            <person name="Furuno M."/>
            <person name="Futaki S."/>
            <person name="Gariboldi M."/>
            <person name="Georgii-Hemming P."/>
            <person name="Gingeras T.R."/>
            <person name="Gojobori T."/>
            <person name="Green R.E."/>
            <person name="Gustincich S."/>
            <person name="Harbers M."/>
            <person name="Hayashi Y."/>
            <person name="Hensch T.K."/>
            <person name="Hirokawa N."/>
            <person name="Hill D."/>
            <person name="Huminiecki L."/>
            <person name="Iacono M."/>
            <person name="Ikeo K."/>
            <person name="Iwama A."/>
            <person name="Ishikawa T."/>
            <person name="Jakt M."/>
            <person name="Kanapin A."/>
            <person name="Katoh M."/>
            <person name="Kawasawa Y."/>
            <person name="Kelso J."/>
            <person name="Kitamura H."/>
            <person name="Kitano H."/>
            <person name="Kollias G."/>
            <person name="Krishnan S.P."/>
            <person name="Kruger A."/>
            <person name="Kummerfeld S.K."/>
            <person name="Kurochkin I.V."/>
            <person name="Lareau L.F."/>
            <person name="Lazarevic D."/>
            <person name="Lipovich L."/>
            <person name="Liu J."/>
            <person name="Liuni S."/>
            <person name="McWilliam S."/>
            <person name="Madan Babu M."/>
            <person name="Madera M."/>
            <person name="Marchionni L."/>
            <person name="Matsuda H."/>
            <person name="Matsuzawa S."/>
            <person name="Miki H."/>
            <person name="Mignone F."/>
            <person name="Miyake S."/>
            <person name="Morris K."/>
            <person name="Mottagui-Tabar S."/>
            <person name="Mulder N."/>
            <person name="Nakano N."/>
            <person name="Nakauchi H."/>
            <person name="Ng P."/>
            <person name="Nilsson R."/>
            <person name="Nishiguchi S."/>
            <person name="Nishikawa S."/>
            <person name="Nori F."/>
            <person name="Ohara O."/>
            <person name="Okazaki Y."/>
            <person name="Orlando V."/>
            <person name="Pang K.C."/>
            <person name="Pavan W.J."/>
            <person name="Pavesi G."/>
            <person name="Pesole G."/>
            <person name="Petrovsky N."/>
            <person name="Piazza S."/>
            <person name="Reed J."/>
            <person name="Reid J.F."/>
            <person name="Ring B.Z."/>
            <person name="Ringwald M."/>
            <person name="Rost B."/>
            <person name="Ruan Y."/>
            <person name="Salzberg S.L."/>
            <person name="Sandelin A."/>
            <person name="Schneider C."/>
            <person name="Schoenbach C."/>
            <person name="Sekiguchi K."/>
            <person name="Semple C.A."/>
            <person name="Seno S."/>
            <person name="Sessa L."/>
            <person name="Sheng Y."/>
            <person name="Shibata Y."/>
            <person name="Shimada H."/>
            <person name="Shimada K."/>
            <person name="Silva D."/>
            <person name="Sinclair B."/>
            <person name="Sperling S."/>
            <person name="Stupka E."/>
            <person name="Sugiura K."/>
            <person name="Sultana R."/>
            <person name="Takenaka Y."/>
            <person name="Taki K."/>
            <person name="Tammoja K."/>
            <person name="Tan S.L."/>
            <person name="Tang S."/>
            <person name="Taylor M.S."/>
            <person name="Tegner J."/>
            <person name="Teichmann S.A."/>
            <person name="Ueda H.R."/>
            <person name="van Nimwegen E."/>
            <person name="Verardo R."/>
            <person name="Wei C.L."/>
            <person name="Yagi K."/>
            <person name="Yamanishi H."/>
            <person name="Zabarovsky E."/>
            <person name="Zhu S."/>
            <person name="Zimmer A."/>
            <person name="Hide W."/>
            <person name="Bult C."/>
            <person name="Grimmond S.M."/>
            <person name="Teasdale R.D."/>
            <person name="Liu E.T."/>
            <person name="Brusic V."/>
            <person name="Quackenbush J."/>
            <person name="Wahlestedt C."/>
            <person name="Mattick J.S."/>
            <person name="Hume D.A."/>
            <person name="Kai C."/>
            <person name="Sasaki D."/>
            <person name="Tomaru Y."/>
            <person name="Fukuda S."/>
            <person name="Kanamori-Katayama M."/>
            <person name="Suzuki M."/>
            <person name="Aoki J."/>
            <person name="Arakawa T."/>
            <person name="Iida J."/>
            <person name="Imamura K."/>
            <person name="Itoh M."/>
            <person name="Kato T."/>
            <person name="Kawaji H."/>
            <person name="Kawagashira N."/>
            <person name="Kawashima T."/>
            <person name="Kojima M."/>
            <person name="Kondo S."/>
            <person name="Konno H."/>
            <person name="Nakano K."/>
            <person name="Ninomiya N."/>
            <person name="Nishio T."/>
            <person name="Okada M."/>
            <person name="Plessy C."/>
            <person name="Shibata K."/>
            <person name="Shiraki T."/>
            <person name="Suzuki S."/>
            <person name="Tagami M."/>
            <person name="Waki K."/>
            <person name="Watahiki A."/>
            <person name="Okamura-Oho Y."/>
            <person name="Suzuki H."/>
            <person name="Kawai J."/>
            <person name="Hayashizaki Y."/>
        </authorList>
    </citation>
    <scope>NUCLEOTIDE SEQUENCE [LARGE SCALE MRNA] (ISOFORMS 1 AND 2)</scope>
    <source>
        <strain>C57BL/6J</strain>
        <strain>NOD</strain>
        <tissue>Spleen</tissue>
    </source>
</reference>
<reference key="2">
    <citation type="journal article" date="2009" name="PLoS Biol.">
        <title>Lineage-specific biology revealed by a finished genome assembly of the mouse.</title>
        <authorList>
            <person name="Church D.M."/>
            <person name="Goodstadt L."/>
            <person name="Hillier L.W."/>
            <person name="Zody M.C."/>
            <person name="Goldstein S."/>
            <person name="She X."/>
            <person name="Bult C.J."/>
            <person name="Agarwala R."/>
            <person name="Cherry J.L."/>
            <person name="DiCuccio M."/>
            <person name="Hlavina W."/>
            <person name="Kapustin Y."/>
            <person name="Meric P."/>
            <person name="Maglott D."/>
            <person name="Birtle Z."/>
            <person name="Marques A.C."/>
            <person name="Graves T."/>
            <person name="Zhou S."/>
            <person name="Teague B."/>
            <person name="Potamousis K."/>
            <person name="Churas C."/>
            <person name="Place M."/>
            <person name="Herschleb J."/>
            <person name="Runnheim R."/>
            <person name="Forrest D."/>
            <person name="Amos-Landgraf J."/>
            <person name="Schwartz D.C."/>
            <person name="Cheng Z."/>
            <person name="Lindblad-Toh K."/>
            <person name="Eichler E.E."/>
            <person name="Ponting C.P."/>
        </authorList>
    </citation>
    <scope>NUCLEOTIDE SEQUENCE [LARGE SCALE GENOMIC DNA]</scope>
    <source>
        <strain>C57BL/6J</strain>
    </source>
</reference>
<reference key="3">
    <citation type="journal article" date="2004" name="Genome Res.">
        <title>The status, quality, and expansion of the NIH full-length cDNA project: the Mammalian Gene Collection (MGC).</title>
        <authorList>
            <consortium name="The MGC Project Team"/>
        </authorList>
    </citation>
    <scope>NUCLEOTIDE SEQUENCE [LARGE SCALE MRNA] (ISOFORM 1)</scope>
    <source>
        <strain>C57BL/6J</strain>
        <tissue>Brain</tissue>
    </source>
</reference>
<reference key="4">
    <citation type="journal article" date="2010" name="Cell">
        <title>A tissue-specific atlas of mouse protein phosphorylation and expression.</title>
        <authorList>
            <person name="Huttlin E.L."/>
            <person name="Jedrychowski M.P."/>
            <person name="Elias J.E."/>
            <person name="Goswami T."/>
            <person name="Rad R."/>
            <person name="Beausoleil S.A."/>
            <person name="Villen J."/>
            <person name="Haas W."/>
            <person name="Sowa M.E."/>
            <person name="Gygi S.P."/>
        </authorList>
    </citation>
    <scope>IDENTIFICATION BY MASS SPECTROMETRY [LARGE SCALE ANALYSIS]</scope>
</reference>
<reference key="5">
    <citation type="journal article" date="2015" name="Neurogenetics">
        <title>Deletion of Inpp5a causes ataxia and cerebellar degeneration in mice.</title>
        <authorList>
            <person name="Yang A.W."/>
            <person name="Sachs A.J."/>
            <person name="Nystuen A.M."/>
        </authorList>
    </citation>
    <scope>FUNCTION</scope>
    <scope>CATALYTIC ACTIVITY</scope>
    <scope>DISRUPTION PHENOTYPE</scope>
    <scope>SUBCELLULAR LOCATION</scope>
    <scope>TISSUE SPECIFICITY</scope>
</reference>
<reference key="6">
    <citation type="journal article" date="2019" name="Exp. Cell Res.">
        <title>Fam208a orchestrates interaction protein network essential for early embryonic development and cell division.</title>
        <authorList>
            <person name="Gresakova V."/>
            <person name="Novosadova V."/>
            <person name="Prochazkova M."/>
            <person name="Bhargava S."/>
            <person name="Jenickova I."/>
            <person name="Prochazka J."/>
            <person name="Sedlacek R."/>
        </authorList>
    </citation>
    <scope>INTERACTION WITH TASOR</scope>
    <scope>TISSUE SPECIFICITY</scope>
</reference>
<feature type="chain" id="PRO_0000451144" description="Inositol polyphosphate-5-phosphatase A">
    <location>
        <begin position="1"/>
        <end position="409"/>
    </location>
</feature>
<feature type="propeptide" id="PRO_0000451145" description="Removed in mature form" evidence="1">
    <location>
        <begin position="410"/>
        <end position="412"/>
    </location>
</feature>
<feature type="lipid moiety-binding region" description="S-farnesyl cysteine" evidence="1">
    <location>
        <position position="409"/>
    </location>
</feature>
<feature type="splice variant" id="VSP_060756" description="In isoform 2." evidence="4">
    <original>PHAHVHKCCVVQ</original>
    <variation>RCQRRERILERPPCSSVSNSSS</variation>
    <location>
        <begin position="401"/>
        <end position="412"/>
    </location>
</feature>
<feature type="sequence conflict" description="In Ref. 1; BAC38919." evidence="4" ref="1">
    <original>A</original>
    <variation>V</variation>
    <location>
        <position position="11"/>
    </location>
</feature>
<feature type="sequence conflict" description="In Ref. 1; BAC38919." evidence="4" ref="1">
    <original>E</original>
    <variation>D</variation>
    <location>
        <position position="27"/>
    </location>
</feature>
<feature type="sequence conflict" description="In Ref. 1; BAC38919." evidence="4" ref="1">
    <original>E</original>
    <variation>G</variation>
    <location>
        <position position="36"/>
    </location>
</feature>
<name>I5P1_MOUSE</name>
<organism>
    <name type="scientific">Mus musculus</name>
    <name type="common">Mouse</name>
    <dbReference type="NCBI Taxonomy" id="10090"/>
    <lineage>
        <taxon>Eukaryota</taxon>
        <taxon>Metazoa</taxon>
        <taxon>Chordata</taxon>
        <taxon>Craniata</taxon>
        <taxon>Vertebrata</taxon>
        <taxon>Euteleostomi</taxon>
        <taxon>Mammalia</taxon>
        <taxon>Eutheria</taxon>
        <taxon>Euarchontoglires</taxon>
        <taxon>Glires</taxon>
        <taxon>Rodentia</taxon>
        <taxon>Myomorpha</taxon>
        <taxon>Muroidea</taxon>
        <taxon>Muridae</taxon>
        <taxon>Murinae</taxon>
        <taxon>Mus</taxon>
        <taxon>Mus</taxon>
    </lineage>
</organism>
<comment type="function">
    <text evidence="2">Phosphatase that specifically hydrolyzes the 5-phosphate of inositol 1,4,5-trisphosphate to inositol 1,4-bisphosphate, and inositol 1,3,4,5-tetrasphosphate to inositol 1,3,4-trisphosphate (PubMed:26051944). Plays a crucial role in the survival of cerebellar Purkinje cells (PubMed:26051944).</text>
</comment>
<comment type="catalytic activity">
    <reaction evidence="2">
        <text>1D-myo-inositol 1,4,5-trisphosphate + H2O = 1D-myo-inositol 1,4-bisphosphate + phosphate</text>
        <dbReference type="Rhea" id="RHEA:19797"/>
        <dbReference type="ChEBI" id="CHEBI:15377"/>
        <dbReference type="ChEBI" id="CHEBI:43474"/>
        <dbReference type="ChEBI" id="CHEBI:58282"/>
        <dbReference type="ChEBI" id="CHEBI:203600"/>
        <dbReference type="EC" id="3.1.3.56"/>
    </reaction>
    <physiologicalReaction direction="left-to-right" evidence="5">
        <dbReference type="Rhea" id="RHEA:19798"/>
    </physiologicalReaction>
</comment>
<comment type="catalytic activity">
    <reaction evidence="2">
        <text>1D-myo-inositol 1,3,4,5-tetrakisphosphate + H2O = 1D-myo-inositol 1,3,4-trisphosphate + phosphate</text>
        <dbReference type="Rhea" id="RHEA:11392"/>
        <dbReference type="ChEBI" id="CHEBI:15377"/>
        <dbReference type="ChEBI" id="CHEBI:43474"/>
        <dbReference type="ChEBI" id="CHEBI:57895"/>
        <dbReference type="ChEBI" id="CHEBI:58414"/>
        <dbReference type="EC" id="3.1.3.56"/>
    </reaction>
    <physiologicalReaction direction="left-to-right" evidence="5">
        <dbReference type="Rhea" id="RHEA:11393"/>
    </physiologicalReaction>
</comment>
<comment type="subunit">
    <text evidence="3">Interacts with TASOR.</text>
</comment>
<comment type="subcellular location">
    <subcellularLocation>
        <location evidence="1">Cell membrane</location>
        <topology evidence="1">Lipid-anchor</topology>
    </subcellularLocation>
    <subcellularLocation>
        <location evidence="2">Cell projection</location>
        <location evidence="2">Dendrite</location>
    </subcellularLocation>
</comment>
<comment type="alternative products">
    <event type="alternative splicing"/>
    <isoform>
        <id>Q7TNC9-1</id>
        <name>1</name>
        <sequence type="displayed"/>
    </isoform>
    <isoform>
        <id>Q7TNC9-2</id>
        <name>2</name>
        <sequence type="described" ref="VSP_060756"/>
    </isoform>
</comment>
<comment type="tissue specificity">
    <text evidence="2 3">Expressed at high levels in cerebellar Purkinje cells (at protein level) (PubMed:26051944). Expressed in Sertoli cells of the testis (PubMed:31112734).</text>
</comment>
<comment type="PTM">
    <text evidence="1">Isoprenylation at Cys-409 is required for localization at the membrane.</text>
</comment>
<comment type="disruption phenotype">
    <text evidence="2">Genetic deletion causes a perinatal lethal phenotype in most mutant mice (PubMed:26051944). A small percentage of mutants thrive and have a phenotype characterized by an ataxic gait and progressive Purkinje cell degeneration (PubMed:26051944). Purkinje cell death is spatially patterned with surviving Purkinje cells appearing normal and maintaining molecular layer morphology (PubMed:26051944). Phosphatase activity toward phosphoinositol substrates is reduced in the mutant relative to wild-type littermates (PubMed:26051944).</text>
</comment>
<comment type="similarity">
    <text evidence="4">Belongs to the inositol 1,4,5-trisphosphate 5-phosphatase type I family.</text>
</comment>
<proteinExistence type="evidence at protein level"/>